<dbReference type="EMBL" id="AE017354">
    <property type="protein sequence ID" value="AAU27794.1"/>
    <property type="status" value="ALT_INIT"/>
    <property type="molecule type" value="Genomic_DNA"/>
</dbReference>
<dbReference type="RefSeq" id="WP_010947441.1">
    <property type="nucleotide sequence ID" value="NC_002942.5"/>
</dbReference>
<dbReference type="RefSeq" id="YP_095741.2">
    <property type="nucleotide sequence ID" value="NC_002942.5"/>
</dbReference>
<dbReference type="SMR" id="Q5ZUS8"/>
<dbReference type="STRING" id="272624.lpg1714"/>
<dbReference type="PaxDb" id="272624-lpg1714"/>
<dbReference type="GeneID" id="57035703"/>
<dbReference type="KEGG" id="lpn:lpg1714"/>
<dbReference type="PATRIC" id="fig|272624.6.peg.1795"/>
<dbReference type="eggNOG" id="COG0052">
    <property type="taxonomic scope" value="Bacteria"/>
</dbReference>
<dbReference type="HOGENOM" id="CLU_040318_1_0_6"/>
<dbReference type="OrthoDB" id="9808036at2"/>
<dbReference type="Proteomes" id="UP000000609">
    <property type="component" value="Chromosome"/>
</dbReference>
<dbReference type="GO" id="GO:0022627">
    <property type="term" value="C:cytosolic small ribosomal subunit"/>
    <property type="evidence" value="ECO:0007669"/>
    <property type="project" value="TreeGrafter"/>
</dbReference>
<dbReference type="GO" id="GO:0003735">
    <property type="term" value="F:structural constituent of ribosome"/>
    <property type="evidence" value="ECO:0007669"/>
    <property type="project" value="InterPro"/>
</dbReference>
<dbReference type="GO" id="GO:0006412">
    <property type="term" value="P:translation"/>
    <property type="evidence" value="ECO:0007669"/>
    <property type="project" value="UniProtKB-UniRule"/>
</dbReference>
<dbReference type="CDD" id="cd01425">
    <property type="entry name" value="RPS2"/>
    <property type="match status" value="1"/>
</dbReference>
<dbReference type="FunFam" id="1.10.287.610:FF:000001">
    <property type="entry name" value="30S ribosomal protein S2"/>
    <property type="match status" value="1"/>
</dbReference>
<dbReference type="Gene3D" id="3.40.50.10490">
    <property type="entry name" value="Glucose-6-phosphate isomerase like protein, domain 1"/>
    <property type="match status" value="1"/>
</dbReference>
<dbReference type="Gene3D" id="1.10.287.610">
    <property type="entry name" value="Helix hairpin bin"/>
    <property type="match status" value="1"/>
</dbReference>
<dbReference type="HAMAP" id="MF_00291_B">
    <property type="entry name" value="Ribosomal_uS2_B"/>
    <property type="match status" value="1"/>
</dbReference>
<dbReference type="InterPro" id="IPR001865">
    <property type="entry name" value="Ribosomal_uS2"/>
</dbReference>
<dbReference type="InterPro" id="IPR005706">
    <property type="entry name" value="Ribosomal_uS2_bac/mit/plastid"/>
</dbReference>
<dbReference type="InterPro" id="IPR018130">
    <property type="entry name" value="Ribosomal_uS2_CS"/>
</dbReference>
<dbReference type="InterPro" id="IPR023591">
    <property type="entry name" value="Ribosomal_uS2_flav_dom_sf"/>
</dbReference>
<dbReference type="NCBIfam" id="TIGR01011">
    <property type="entry name" value="rpsB_bact"/>
    <property type="match status" value="1"/>
</dbReference>
<dbReference type="PANTHER" id="PTHR12534">
    <property type="entry name" value="30S RIBOSOMAL PROTEIN S2 PROKARYOTIC AND ORGANELLAR"/>
    <property type="match status" value="1"/>
</dbReference>
<dbReference type="PANTHER" id="PTHR12534:SF0">
    <property type="entry name" value="SMALL RIBOSOMAL SUBUNIT PROTEIN US2M"/>
    <property type="match status" value="1"/>
</dbReference>
<dbReference type="Pfam" id="PF00318">
    <property type="entry name" value="Ribosomal_S2"/>
    <property type="match status" value="1"/>
</dbReference>
<dbReference type="PRINTS" id="PR00395">
    <property type="entry name" value="RIBOSOMALS2"/>
</dbReference>
<dbReference type="SUPFAM" id="SSF52313">
    <property type="entry name" value="Ribosomal protein S2"/>
    <property type="match status" value="1"/>
</dbReference>
<dbReference type="PROSITE" id="PS00962">
    <property type="entry name" value="RIBOSOMAL_S2_1"/>
    <property type="match status" value="1"/>
</dbReference>
<dbReference type="PROSITE" id="PS00963">
    <property type="entry name" value="RIBOSOMAL_S2_2"/>
    <property type="match status" value="1"/>
</dbReference>
<gene>
    <name evidence="1" type="primary">rpsB</name>
    <name type="ordered locus">lpg1714</name>
</gene>
<protein>
    <recommendedName>
        <fullName evidence="1">Small ribosomal subunit protein uS2</fullName>
    </recommendedName>
    <alternativeName>
        <fullName evidence="2">30S ribosomal protein S2</fullName>
    </alternativeName>
</protein>
<name>RS2_LEGPH</name>
<organism>
    <name type="scientific">Legionella pneumophila subsp. pneumophila (strain Philadelphia 1 / ATCC 33152 / DSM 7513)</name>
    <dbReference type="NCBI Taxonomy" id="272624"/>
    <lineage>
        <taxon>Bacteria</taxon>
        <taxon>Pseudomonadati</taxon>
        <taxon>Pseudomonadota</taxon>
        <taxon>Gammaproteobacteria</taxon>
        <taxon>Legionellales</taxon>
        <taxon>Legionellaceae</taxon>
        <taxon>Legionella</taxon>
    </lineage>
</organism>
<reference key="1">
    <citation type="journal article" date="2004" name="Science">
        <title>The genomic sequence of the accidental pathogen Legionella pneumophila.</title>
        <authorList>
            <person name="Chien M."/>
            <person name="Morozova I."/>
            <person name="Shi S."/>
            <person name="Sheng H."/>
            <person name="Chen J."/>
            <person name="Gomez S.M."/>
            <person name="Asamani G."/>
            <person name="Hill K."/>
            <person name="Nuara J."/>
            <person name="Feder M."/>
            <person name="Rineer J."/>
            <person name="Greenberg J.J."/>
            <person name="Steshenko V."/>
            <person name="Park S.H."/>
            <person name="Zhao B."/>
            <person name="Teplitskaya E."/>
            <person name="Edwards J.R."/>
            <person name="Pampou S."/>
            <person name="Georghiou A."/>
            <person name="Chou I.-C."/>
            <person name="Iannuccilli W."/>
            <person name="Ulz M.E."/>
            <person name="Kim D.H."/>
            <person name="Geringer-Sameth A."/>
            <person name="Goldsberry C."/>
            <person name="Morozov P."/>
            <person name="Fischer S.G."/>
            <person name="Segal G."/>
            <person name="Qu X."/>
            <person name="Rzhetsky A."/>
            <person name="Zhang P."/>
            <person name="Cayanis E."/>
            <person name="De Jong P.J."/>
            <person name="Ju J."/>
            <person name="Kalachikov S."/>
            <person name="Shuman H.A."/>
            <person name="Russo J.J."/>
        </authorList>
    </citation>
    <scope>NUCLEOTIDE SEQUENCE [LARGE SCALE GENOMIC DNA]</scope>
    <source>
        <strain>Philadelphia 1 / ATCC 33152 / DSM 7513</strain>
    </source>
</reference>
<feature type="chain" id="PRO_0000134185" description="Small ribosomal subunit protein uS2">
    <location>
        <begin position="1"/>
        <end position="254"/>
    </location>
</feature>
<keyword id="KW-1185">Reference proteome</keyword>
<keyword id="KW-0687">Ribonucleoprotein</keyword>
<keyword id="KW-0689">Ribosomal protein</keyword>
<sequence>MNNVSMRELLEAGAHFGHRTRFWNPKMSEYIFGSRNKIHIINLEKTLPMLSDVTNYVSRLAANKAKILFVGTKRAAQDSIREHAKRCGMPYVDHRWLGGMLTNYKTVRQSIFRLKELKEMKEKGLFNDMIKKEALMLTRELEKLERSLGGIENMGGLPDALFVVDVGFEHIAVEEARRLRIPVIGVVDTNNSPDNIDYVIPGNDDSMRAVDIYVRCVADAILDGKNSNTVGRVSSDSEFVEVTSNSNEEEKSGE</sequence>
<evidence type="ECO:0000255" key="1">
    <source>
        <dbReference type="HAMAP-Rule" id="MF_00291"/>
    </source>
</evidence>
<evidence type="ECO:0000305" key="2"/>
<comment type="similarity">
    <text evidence="1">Belongs to the universal ribosomal protein uS2 family.</text>
</comment>
<comment type="sequence caution" evidence="2">
    <conflict type="erroneous initiation">
        <sequence resource="EMBL-CDS" id="AAU27794"/>
    </conflict>
</comment>
<accession>Q5ZUS8</accession>
<proteinExistence type="inferred from homology"/>